<gene>
    <name type="primary">SHISA2</name>
    <name type="synonym">TMEM46</name>
</gene>
<reference key="1">
    <citation type="submission" date="2007-07" db="EMBL/GenBank/DDBJ databases">
        <authorList>
            <consortium name="NIH - Mammalian Gene Collection (MGC) project"/>
        </authorList>
    </citation>
    <scope>NUCLEOTIDE SEQUENCE [LARGE SCALE MRNA]</scope>
    <source>
        <strain>Hereford</strain>
        <tissue>Fetal muscle</tissue>
    </source>
</reference>
<feature type="signal peptide" evidence="2">
    <location>
        <begin position="1"/>
        <end position="27"/>
    </location>
</feature>
<feature type="chain" id="PRO_0000330023" description="Protein shisa-2 homolog">
    <location>
        <begin position="28"/>
        <end position="289"/>
    </location>
</feature>
<feature type="topological domain" description="Extracellular" evidence="2">
    <location>
        <begin position="28"/>
        <end position="104"/>
    </location>
</feature>
<feature type="transmembrane region" description="Helical" evidence="2">
    <location>
        <begin position="105"/>
        <end position="125"/>
    </location>
</feature>
<feature type="topological domain" description="Cytoplasmic" evidence="2">
    <location>
        <begin position="126"/>
        <end position="289"/>
    </location>
</feature>
<feature type="region of interest" description="Disordered" evidence="3">
    <location>
        <begin position="81"/>
        <end position="102"/>
    </location>
</feature>
<feature type="region of interest" description="Disordered" evidence="3">
    <location>
        <begin position="162"/>
        <end position="198"/>
    </location>
</feature>
<feature type="compositionally biased region" description="Low complexity" evidence="3">
    <location>
        <begin position="163"/>
        <end position="191"/>
    </location>
</feature>
<keyword id="KW-0217">Developmental protein</keyword>
<keyword id="KW-0256">Endoplasmic reticulum</keyword>
<keyword id="KW-0472">Membrane</keyword>
<keyword id="KW-1185">Reference proteome</keyword>
<keyword id="KW-0732">Signal</keyword>
<keyword id="KW-0812">Transmembrane</keyword>
<keyword id="KW-1133">Transmembrane helix</keyword>
<evidence type="ECO:0000250" key="1"/>
<evidence type="ECO:0000255" key="2"/>
<evidence type="ECO:0000256" key="3">
    <source>
        <dbReference type="SAM" id="MobiDB-lite"/>
    </source>
</evidence>
<evidence type="ECO:0000305" key="4"/>
<organism>
    <name type="scientific">Bos taurus</name>
    <name type="common">Bovine</name>
    <dbReference type="NCBI Taxonomy" id="9913"/>
    <lineage>
        <taxon>Eukaryota</taxon>
        <taxon>Metazoa</taxon>
        <taxon>Chordata</taxon>
        <taxon>Craniata</taxon>
        <taxon>Vertebrata</taxon>
        <taxon>Euteleostomi</taxon>
        <taxon>Mammalia</taxon>
        <taxon>Eutheria</taxon>
        <taxon>Laurasiatheria</taxon>
        <taxon>Artiodactyla</taxon>
        <taxon>Ruminantia</taxon>
        <taxon>Pecora</taxon>
        <taxon>Bovidae</taxon>
        <taxon>Bovinae</taxon>
        <taxon>Bos</taxon>
    </lineage>
</organism>
<proteinExistence type="evidence at transcript level"/>
<accession>A6QPA0</accession>
<dbReference type="EMBL" id="BC149221">
    <property type="protein sequence ID" value="AAI49222.1"/>
    <property type="molecule type" value="mRNA"/>
</dbReference>
<dbReference type="RefSeq" id="NP_001094735.1">
    <property type="nucleotide sequence ID" value="NM_001101265.1"/>
</dbReference>
<dbReference type="SMR" id="A6QPA0"/>
<dbReference type="FunCoup" id="A6QPA0">
    <property type="interactions" value="93"/>
</dbReference>
<dbReference type="STRING" id="9913.ENSBTAP00000024243"/>
<dbReference type="PaxDb" id="9913-ENSBTAP00000024243"/>
<dbReference type="Ensembl" id="ENSBTAT00000024243.5">
    <property type="protein sequence ID" value="ENSBTAP00000024243.4"/>
    <property type="gene ID" value="ENSBTAG00000018214.5"/>
</dbReference>
<dbReference type="GeneID" id="617336"/>
<dbReference type="KEGG" id="bta:617336"/>
<dbReference type="CTD" id="387914"/>
<dbReference type="VEuPathDB" id="HostDB:ENSBTAG00000018214"/>
<dbReference type="VGNC" id="VGNC:34598">
    <property type="gene designation" value="SHISA2"/>
</dbReference>
<dbReference type="eggNOG" id="ENOG502QWT7">
    <property type="taxonomic scope" value="Eukaryota"/>
</dbReference>
<dbReference type="GeneTree" id="ENSGT00940000157443"/>
<dbReference type="HOGENOM" id="CLU_085916_0_0_1"/>
<dbReference type="InParanoid" id="A6QPA0"/>
<dbReference type="OMA" id="YAHPVSP"/>
<dbReference type="OrthoDB" id="10025410at2759"/>
<dbReference type="TreeFam" id="TF330800"/>
<dbReference type="Proteomes" id="UP000009136">
    <property type="component" value="Chromosome 12"/>
</dbReference>
<dbReference type="Bgee" id="ENSBTAG00000018214">
    <property type="expression patterns" value="Expressed in biceps femoris and 90 other cell types or tissues"/>
</dbReference>
<dbReference type="GO" id="GO:0005783">
    <property type="term" value="C:endoplasmic reticulum"/>
    <property type="evidence" value="ECO:0000318"/>
    <property type="project" value="GO_Central"/>
</dbReference>
<dbReference type="GO" id="GO:0005789">
    <property type="term" value="C:endoplasmic reticulum membrane"/>
    <property type="evidence" value="ECO:0007669"/>
    <property type="project" value="UniProtKB-SubCell"/>
</dbReference>
<dbReference type="GO" id="GO:0040037">
    <property type="term" value="P:negative regulation of fibroblast growth factor receptor signaling pathway"/>
    <property type="evidence" value="ECO:0000318"/>
    <property type="project" value="GO_Central"/>
</dbReference>
<dbReference type="GO" id="GO:0030178">
    <property type="term" value="P:negative regulation of Wnt signaling pathway"/>
    <property type="evidence" value="ECO:0000318"/>
    <property type="project" value="GO_Central"/>
</dbReference>
<dbReference type="InterPro" id="IPR026910">
    <property type="entry name" value="Shisa"/>
</dbReference>
<dbReference type="InterPro" id="IPR053891">
    <property type="entry name" value="Shisa_N"/>
</dbReference>
<dbReference type="PANTHER" id="PTHR31395:SF0">
    <property type="entry name" value="PROTEIN SHISA-2 HOMOLOG"/>
    <property type="match status" value="1"/>
</dbReference>
<dbReference type="PANTHER" id="PTHR31395">
    <property type="entry name" value="SHISA"/>
    <property type="match status" value="1"/>
</dbReference>
<dbReference type="Pfam" id="PF13908">
    <property type="entry name" value="Shisa_N"/>
    <property type="match status" value="1"/>
</dbReference>
<protein>
    <recommendedName>
        <fullName>Protein shisa-2 homolog</fullName>
    </recommendedName>
    <alternativeName>
        <fullName>Transmembrane protein 46</fullName>
    </alternativeName>
</protein>
<comment type="function">
    <text evidence="1">Plays an essential role in the maturation of presomitic mesoderm cells by individual attenuation of both FGF and WNT signaling.</text>
</comment>
<comment type="subcellular location">
    <subcellularLocation>
        <location evidence="1">Endoplasmic reticulum membrane</location>
        <topology evidence="1">Single-pass type I membrane protein</topology>
    </subcellularLocation>
</comment>
<comment type="similarity">
    <text evidence="4">Belongs to the shisa family.</text>
</comment>
<sequence length="289" mass="30510">MWAGCHPDAASLLRLLLAALLAAGALASGEYCHGWLDAQGVWRIGFQCPERFDGGDATICCGSCALRYCCSSADARLDQGGCDNDRQQGAGEPGRADKDGPDGSAVPIYVPFLIVGSVFVAFIVLGSLVAACCCRCLRPKQEPQLSRAPGGPRLVETIPMIPSASTSRGSSSRQSSTAASSSSSANSGARAPPTRSQTNCCLPEGTMNNVYVNMPTNFSVLNCQQATQIVPHQGQYLHPPFVGYTVQPDSVPLTPVPPFLDGLQTGYRQLQAPFPHTNSEQKMYPAVTV</sequence>
<name>SHSA2_BOVIN</name>